<proteinExistence type="inferred from homology"/>
<name>RS21_RHOP2</name>
<sequence length="101" mass="11150">MQVLVRDNNVDQALKALKKKMQREGIFREMKLRGHYEKPSEKKAREKAEAVRRARKLARKKLQREGLLPMKPKPAFGAERGRPGAGGPGAGGPGAGPRGPR</sequence>
<feature type="chain" id="PRO_0000266752" description="Small ribosomal subunit protein bS21">
    <location>
        <begin position="1"/>
        <end position="101"/>
    </location>
</feature>
<feature type="region of interest" description="Disordered" evidence="2">
    <location>
        <begin position="36"/>
        <end position="101"/>
    </location>
</feature>
<feature type="compositionally biased region" description="Basic and acidic residues" evidence="2">
    <location>
        <begin position="36"/>
        <end position="52"/>
    </location>
</feature>
<feature type="compositionally biased region" description="Basic residues" evidence="2">
    <location>
        <begin position="53"/>
        <end position="62"/>
    </location>
</feature>
<feature type="compositionally biased region" description="Gly residues" evidence="2">
    <location>
        <begin position="83"/>
        <end position="101"/>
    </location>
</feature>
<protein>
    <recommendedName>
        <fullName evidence="1">Small ribosomal subunit protein bS21</fullName>
    </recommendedName>
    <alternativeName>
        <fullName evidence="3">30S ribosomal protein S21</fullName>
    </alternativeName>
</protein>
<gene>
    <name evidence="1" type="primary">rpsU</name>
    <name type="ordered locus">RPB_1445</name>
</gene>
<accession>Q2J055</accession>
<reference key="1">
    <citation type="submission" date="2006-01" db="EMBL/GenBank/DDBJ databases">
        <title>Complete sequence of Rhodopseudomonas palustris HaA2.</title>
        <authorList>
            <consortium name="US DOE Joint Genome Institute"/>
            <person name="Copeland A."/>
            <person name="Lucas S."/>
            <person name="Lapidus A."/>
            <person name="Barry K."/>
            <person name="Detter J.C."/>
            <person name="Glavina T."/>
            <person name="Hammon N."/>
            <person name="Israni S."/>
            <person name="Pitluck S."/>
            <person name="Chain P."/>
            <person name="Malfatti S."/>
            <person name="Shin M."/>
            <person name="Vergez L."/>
            <person name="Schmutz J."/>
            <person name="Larimer F."/>
            <person name="Land M."/>
            <person name="Hauser L."/>
            <person name="Pelletier D.A."/>
            <person name="Kyrpides N."/>
            <person name="Anderson I."/>
            <person name="Oda Y."/>
            <person name="Harwood C.S."/>
            <person name="Richardson P."/>
        </authorList>
    </citation>
    <scope>NUCLEOTIDE SEQUENCE [LARGE SCALE GENOMIC DNA]</scope>
    <source>
        <strain>HaA2</strain>
    </source>
</reference>
<evidence type="ECO:0000255" key="1">
    <source>
        <dbReference type="HAMAP-Rule" id="MF_00358"/>
    </source>
</evidence>
<evidence type="ECO:0000256" key="2">
    <source>
        <dbReference type="SAM" id="MobiDB-lite"/>
    </source>
</evidence>
<evidence type="ECO:0000305" key="3"/>
<keyword id="KW-1185">Reference proteome</keyword>
<keyword id="KW-0687">Ribonucleoprotein</keyword>
<keyword id="KW-0689">Ribosomal protein</keyword>
<dbReference type="EMBL" id="CP000250">
    <property type="protein sequence ID" value="ABD06155.1"/>
    <property type="molecule type" value="Genomic_DNA"/>
</dbReference>
<dbReference type="RefSeq" id="WP_011440343.1">
    <property type="nucleotide sequence ID" value="NC_007778.1"/>
</dbReference>
<dbReference type="SMR" id="Q2J055"/>
<dbReference type="STRING" id="316058.RPB_1445"/>
<dbReference type="KEGG" id="rpb:RPB_1445"/>
<dbReference type="eggNOG" id="COG0828">
    <property type="taxonomic scope" value="Bacteria"/>
</dbReference>
<dbReference type="HOGENOM" id="CLU_159258_0_0_5"/>
<dbReference type="OrthoDB" id="9811907at2"/>
<dbReference type="Proteomes" id="UP000008809">
    <property type="component" value="Chromosome"/>
</dbReference>
<dbReference type="GO" id="GO:1990904">
    <property type="term" value="C:ribonucleoprotein complex"/>
    <property type="evidence" value="ECO:0007669"/>
    <property type="project" value="UniProtKB-KW"/>
</dbReference>
<dbReference type="GO" id="GO:0005840">
    <property type="term" value="C:ribosome"/>
    <property type="evidence" value="ECO:0007669"/>
    <property type="project" value="UniProtKB-KW"/>
</dbReference>
<dbReference type="GO" id="GO:0003735">
    <property type="term" value="F:structural constituent of ribosome"/>
    <property type="evidence" value="ECO:0007669"/>
    <property type="project" value="InterPro"/>
</dbReference>
<dbReference type="GO" id="GO:0006412">
    <property type="term" value="P:translation"/>
    <property type="evidence" value="ECO:0007669"/>
    <property type="project" value="UniProtKB-UniRule"/>
</dbReference>
<dbReference type="Gene3D" id="1.20.5.1150">
    <property type="entry name" value="Ribosomal protein S8"/>
    <property type="match status" value="1"/>
</dbReference>
<dbReference type="HAMAP" id="MF_00358">
    <property type="entry name" value="Ribosomal_bS21"/>
    <property type="match status" value="1"/>
</dbReference>
<dbReference type="InterPro" id="IPR001911">
    <property type="entry name" value="Ribosomal_bS21"/>
</dbReference>
<dbReference type="InterPro" id="IPR018278">
    <property type="entry name" value="Ribosomal_bS21_CS"/>
</dbReference>
<dbReference type="InterPro" id="IPR038380">
    <property type="entry name" value="Ribosomal_bS21_sf"/>
</dbReference>
<dbReference type="NCBIfam" id="TIGR00030">
    <property type="entry name" value="S21p"/>
    <property type="match status" value="1"/>
</dbReference>
<dbReference type="PANTHER" id="PTHR21109">
    <property type="entry name" value="MITOCHONDRIAL 28S RIBOSOMAL PROTEIN S21"/>
    <property type="match status" value="1"/>
</dbReference>
<dbReference type="PANTHER" id="PTHR21109:SF0">
    <property type="entry name" value="SMALL RIBOSOMAL SUBUNIT PROTEIN BS21M"/>
    <property type="match status" value="1"/>
</dbReference>
<dbReference type="Pfam" id="PF01165">
    <property type="entry name" value="Ribosomal_S21"/>
    <property type="match status" value="1"/>
</dbReference>
<dbReference type="PROSITE" id="PS01181">
    <property type="entry name" value="RIBOSOMAL_S21"/>
    <property type="match status" value="1"/>
</dbReference>
<comment type="similarity">
    <text evidence="1">Belongs to the bacterial ribosomal protein bS21 family.</text>
</comment>
<organism>
    <name type="scientific">Rhodopseudomonas palustris (strain HaA2)</name>
    <dbReference type="NCBI Taxonomy" id="316058"/>
    <lineage>
        <taxon>Bacteria</taxon>
        <taxon>Pseudomonadati</taxon>
        <taxon>Pseudomonadota</taxon>
        <taxon>Alphaproteobacteria</taxon>
        <taxon>Hyphomicrobiales</taxon>
        <taxon>Nitrobacteraceae</taxon>
        <taxon>Rhodopseudomonas</taxon>
    </lineage>
</organism>